<evidence type="ECO:0000255" key="1">
    <source>
        <dbReference type="HAMAP-Rule" id="MF_00831"/>
    </source>
</evidence>
<protein>
    <recommendedName>
        <fullName evidence="1">3-aminoacrylate deaminase RutC</fullName>
        <shortName evidence="1">3-AA deaminase</shortName>
        <ecNumber evidence="1">3.5.-.-</ecNumber>
    </recommendedName>
</protein>
<feature type="chain" id="PRO_0000402729" description="3-aminoacrylate deaminase RutC">
    <location>
        <begin position="1"/>
        <end position="128"/>
    </location>
</feature>
<proteinExistence type="inferred from homology"/>
<sequence>MPKSVIIPAGSSAPLAPFVPGTLADGVVYVSGTLAFDQHNNVLFADDPKAQTRHVLATIRKVIETAGGTMADVTFNSIFITDWKNYAAINEIYAEFFPGDKPARFCIQCGLVKPDALVEIATIAHIAK</sequence>
<name>RUTC_ECOSE</name>
<accession>B6I986</accession>
<reference key="1">
    <citation type="journal article" date="2008" name="DNA Res.">
        <title>Complete genome sequence and comparative analysis of the wild-type commensal Escherichia coli strain SE11 isolated from a healthy adult.</title>
        <authorList>
            <person name="Oshima K."/>
            <person name="Toh H."/>
            <person name="Ogura Y."/>
            <person name="Sasamoto H."/>
            <person name="Morita H."/>
            <person name="Park S.-H."/>
            <person name="Ooka T."/>
            <person name="Iyoda S."/>
            <person name="Taylor T.D."/>
            <person name="Hayashi T."/>
            <person name="Itoh K."/>
            <person name="Hattori M."/>
        </authorList>
    </citation>
    <scope>NUCLEOTIDE SEQUENCE [LARGE SCALE GENOMIC DNA]</scope>
    <source>
        <strain>SE11</strain>
    </source>
</reference>
<comment type="function">
    <text evidence="1">Involved in pyrimidine catabolism. Catalyzes the deamination of 3-aminoacrylate to malonic semialdehyde, a reaction that can also occur spontaneously. RutC may facilitate the reaction and modulate the metabolic fitness, rather than catalyzing essential functions.</text>
</comment>
<comment type="catalytic activity">
    <reaction evidence="1">
        <text>(Z)-3-aminoacrylate + H2O + H(+) = 3-oxopropanoate + NH4(+)</text>
        <dbReference type="Rhea" id="RHEA:34947"/>
        <dbReference type="ChEBI" id="CHEBI:15377"/>
        <dbReference type="ChEBI" id="CHEBI:15378"/>
        <dbReference type="ChEBI" id="CHEBI:28938"/>
        <dbReference type="ChEBI" id="CHEBI:33190"/>
        <dbReference type="ChEBI" id="CHEBI:59894"/>
    </reaction>
</comment>
<comment type="subunit">
    <text evidence="1">Homotrimer.</text>
</comment>
<comment type="similarity">
    <text evidence="1">Belongs to the RutC family.</text>
</comment>
<gene>
    <name evidence="1" type="primary">rutC</name>
    <name type="ordered locus">ECSE_1072</name>
</gene>
<keyword id="KW-0378">Hydrolase</keyword>
<organism>
    <name type="scientific">Escherichia coli (strain SE11)</name>
    <dbReference type="NCBI Taxonomy" id="409438"/>
    <lineage>
        <taxon>Bacteria</taxon>
        <taxon>Pseudomonadati</taxon>
        <taxon>Pseudomonadota</taxon>
        <taxon>Gammaproteobacteria</taxon>
        <taxon>Enterobacterales</taxon>
        <taxon>Enterobacteriaceae</taxon>
        <taxon>Escherichia</taxon>
    </lineage>
</organism>
<dbReference type="EC" id="3.5.-.-" evidence="1"/>
<dbReference type="EMBL" id="AP009240">
    <property type="protein sequence ID" value="BAG76596.1"/>
    <property type="molecule type" value="Genomic_DNA"/>
</dbReference>
<dbReference type="RefSeq" id="WP_001126774.1">
    <property type="nucleotide sequence ID" value="NC_011415.1"/>
</dbReference>
<dbReference type="SMR" id="B6I986"/>
<dbReference type="KEGG" id="ecy:ECSE_1072"/>
<dbReference type="HOGENOM" id="CLU_100715_7_3_6"/>
<dbReference type="Proteomes" id="UP000008199">
    <property type="component" value="Chromosome"/>
</dbReference>
<dbReference type="GO" id="GO:0005829">
    <property type="term" value="C:cytosol"/>
    <property type="evidence" value="ECO:0007669"/>
    <property type="project" value="TreeGrafter"/>
</dbReference>
<dbReference type="GO" id="GO:0019239">
    <property type="term" value="F:deaminase activity"/>
    <property type="evidence" value="ECO:0007669"/>
    <property type="project" value="TreeGrafter"/>
</dbReference>
<dbReference type="GO" id="GO:0019740">
    <property type="term" value="P:nitrogen utilization"/>
    <property type="evidence" value="ECO:0007669"/>
    <property type="project" value="UniProtKB-UniRule"/>
</dbReference>
<dbReference type="GO" id="GO:0006212">
    <property type="term" value="P:uracil catabolic process"/>
    <property type="evidence" value="ECO:0007669"/>
    <property type="project" value="UniProtKB-UniRule"/>
</dbReference>
<dbReference type="CDD" id="cd00448">
    <property type="entry name" value="YjgF_YER057c_UK114_family"/>
    <property type="match status" value="1"/>
</dbReference>
<dbReference type="FunFam" id="3.30.1330.40:FF:000003">
    <property type="entry name" value="Putative aminoacrylate peracid reductase RutC"/>
    <property type="match status" value="1"/>
</dbReference>
<dbReference type="Gene3D" id="3.30.1330.40">
    <property type="entry name" value="RutC-like"/>
    <property type="match status" value="1"/>
</dbReference>
<dbReference type="HAMAP" id="MF_00831">
    <property type="entry name" value="RutC"/>
    <property type="match status" value="1"/>
</dbReference>
<dbReference type="InterPro" id="IPR019897">
    <property type="entry name" value="RidA_CS"/>
</dbReference>
<dbReference type="InterPro" id="IPR019898">
    <property type="entry name" value="RutC"/>
</dbReference>
<dbReference type="InterPro" id="IPR035959">
    <property type="entry name" value="RutC-like_sf"/>
</dbReference>
<dbReference type="InterPro" id="IPR006175">
    <property type="entry name" value="YjgF/YER057c/UK114"/>
</dbReference>
<dbReference type="NCBIfam" id="TIGR03610">
    <property type="entry name" value="RutC"/>
    <property type="match status" value="1"/>
</dbReference>
<dbReference type="PANTHER" id="PTHR11803">
    <property type="entry name" value="2-IMINOBUTANOATE/2-IMINOPROPANOATE DEAMINASE RIDA"/>
    <property type="match status" value="1"/>
</dbReference>
<dbReference type="PANTHER" id="PTHR11803:SF58">
    <property type="entry name" value="PROTEIN HMF1-RELATED"/>
    <property type="match status" value="1"/>
</dbReference>
<dbReference type="Pfam" id="PF01042">
    <property type="entry name" value="Ribonuc_L-PSP"/>
    <property type="match status" value="1"/>
</dbReference>
<dbReference type="SUPFAM" id="SSF55298">
    <property type="entry name" value="YjgF-like"/>
    <property type="match status" value="1"/>
</dbReference>
<dbReference type="PROSITE" id="PS01094">
    <property type="entry name" value="UPF0076"/>
    <property type="match status" value="1"/>
</dbReference>